<reference key="1">
    <citation type="journal article" date="2000" name="Science">
        <title>Complete genome sequence of Neisseria meningitidis serogroup B strain MC58.</title>
        <authorList>
            <person name="Tettelin H."/>
            <person name="Saunders N.J."/>
            <person name="Heidelberg J.F."/>
            <person name="Jeffries A.C."/>
            <person name="Nelson K.E."/>
            <person name="Eisen J.A."/>
            <person name="Ketchum K.A."/>
            <person name="Hood D.W."/>
            <person name="Peden J.F."/>
            <person name="Dodson R.J."/>
            <person name="Nelson W.C."/>
            <person name="Gwinn M.L."/>
            <person name="DeBoy R.T."/>
            <person name="Peterson J.D."/>
            <person name="Hickey E.K."/>
            <person name="Haft D.H."/>
            <person name="Salzberg S.L."/>
            <person name="White O."/>
            <person name="Fleischmann R.D."/>
            <person name="Dougherty B.A."/>
            <person name="Mason T.M."/>
            <person name="Ciecko A."/>
            <person name="Parksey D.S."/>
            <person name="Blair E."/>
            <person name="Cittone H."/>
            <person name="Clark E.B."/>
            <person name="Cotton M.D."/>
            <person name="Utterback T.R."/>
            <person name="Khouri H.M."/>
            <person name="Qin H."/>
            <person name="Vamathevan J.J."/>
            <person name="Gill J."/>
            <person name="Scarlato V."/>
            <person name="Masignani V."/>
            <person name="Pizza M."/>
            <person name="Grandi G."/>
            <person name="Sun L."/>
            <person name="Smith H.O."/>
            <person name="Fraser C.M."/>
            <person name="Moxon E.R."/>
            <person name="Rappuoli R."/>
            <person name="Venter J.C."/>
        </authorList>
    </citation>
    <scope>NUCLEOTIDE SEQUENCE [LARGE SCALE GENOMIC DNA]</scope>
    <source>
        <strain>ATCC BAA-335 / MC58</strain>
    </source>
</reference>
<accession>Q9K0Y4</accession>
<feature type="chain" id="PRO_0000109049" description="UDP-N-acetylmuramoylalanine--D-glutamate ligase">
    <location>
        <begin position="1"/>
        <end position="445"/>
    </location>
</feature>
<feature type="binding site" evidence="1">
    <location>
        <begin position="117"/>
        <end position="123"/>
    </location>
    <ligand>
        <name>ATP</name>
        <dbReference type="ChEBI" id="CHEBI:30616"/>
    </ligand>
</feature>
<sequence length="445" mass="48163">MTFQNKKILVAGLGGTGISMIAYLRKNGAEVAAYDAELKPERVSQIGKMFDGLVFYTGRLKDALDNGFDILALSPGISERQPDIEAFKQNGGRVLGDIELLADIVNRRDDKVIAITGSNGKTTVTSLVGYLCIKCGLDTVIAGNIGTPVLEAEWQREGKKADVWVLELSSFQLENTESLRPTAATVLNISEDHLDRYDDLLDYAHTKAKIFRGDGVQVLNADDAFCRAMKRAGREVKWFSLEHEADFWLERETGRLKQGNEDLIVTQDIPLQGLHNAANVMAAVALCEAIGLSREALLEHVKTFQGLPHRVEKIGEKNGVVFIDDSKGTNVGATAAAIAGLQNPLFVILGGMGKGQDFTPLRDALVGKAKGVFLIGVDAPQIRRDLDGCGLNMTDCATLGEAVQTAYAQAEAGDIVLLSPACASFDMFKGYAHRSEVFIEAFKAL</sequence>
<proteinExistence type="inferred from homology"/>
<dbReference type="EC" id="6.3.2.9" evidence="1"/>
<dbReference type="EMBL" id="AE002098">
    <property type="protein sequence ID" value="AAF40858.1"/>
    <property type="molecule type" value="Genomic_DNA"/>
</dbReference>
<dbReference type="PIR" id="G81200">
    <property type="entry name" value="G81200"/>
</dbReference>
<dbReference type="RefSeq" id="NP_273468.1">
    <property type="nucleotide sequence ID" value="NC_003112.2"/>
</dbReference>
<dbReference type="RefSeq" id="WP_002224926.1">
    <property type="nucleotide sequence ID" value="NC_003112.2"/>
</dbReference>
<dbReference type="SMR" id="Q9K0Y4"/>
<dbReference type="FunCoup" id="Q9K0Y4">
    <property type="interactions" value="462"/>
</dbReference>
<dbReference type="STRING" id="122586.NMB0420"/>
<dbReference type="PaxDb" id="122586-NMB0420"/>
<dbReference type="KEGG" id="nme:NMB0420"/>
<dbReference type="PATRIC" id="fig|122586.8.peg.532"/>
<dbReference type="HOGENOM" id="CLU_032540_1_0_4"/>
<dbReference type="InParanoid" id="Q9K0Y4"/>
<dbReference type="OrthoDB" id="9809796at2"/>
<dbReference type="UniPathway" id="UPA00219"/>
<dbReference type="Proteomes" id="UP000000425">
    <property type="component" value="Chromosome"/>
</dbReference>
<dbReference type="GO" id="GO:0005737">
    <property type="term" value="C:cytoplasm"/>
    <property type="evidence" value="ECO:0007669"/>
    <property type="project" value="UniProtKB-SubCell"/>
</dbReference>
<dbReference type="GO" id="GO:0005524">
    <property type="term" value="F:ATP binding"/>
    <property type="evidence" value="ECO:0007669"/>
    <property type="project" value="UniProtKB-UniRule"/>
</dbReference>
<dbReference type="GO" id="GO:0008764">
    <property type="term" value="F:UDP-N-acetylmuramoylalanine-D-glutamate ligase activity"/>
    <property type="evidence" value="ECO:0007669"/>
    <property type="project" value="UniProtKB-UniRule"/>
</dbReference>
<dbReference type="GO" id="GO:0051301">
    <property type="term" value="P:cell division"/>
    <property type="evidence" value="ECO:0007669"/>
    <property type="project" value="UniProtKB-KW"/>
</dbReference>
<dbReference type="GO" id="GO:0071555">
    <property type="term" value="P:cell wall organization"/>
    <property type="evidence" value="ECO:0007669"/>
    <property type="project" value="UniProtKB-KW"/>
</dbReference>
<dbReference type="GO" id="GO:0009252">
    <property type="term" value="P:peptidoglycan biosynthetic process"/>
    <property type="evidence" value="ECO:0007669"/>
    <property type="project" value="UniProtKB-UniRule"/>
</dbReference>
<dbReference type="GO" id="GO:0008360">
    <property type="term" value="P:regulation of cell shape"/>
    <property type="evidence" value="ECO:0007669"/>
    <property type="project" value="UniProtKB-KW"/>
</dbReference>
<dbReference type="Gene3D" id="3.90.190.20">
    <property type="entry name" value="Mur ligase, C-terminal domain"/>
    <property type="match status" value="1"/>
</dbReference>
<dbReference type="Gene3D" id="3.40.1190.10">
    <property type="entry name" value="Mur-like, catalytic domain"/>
    <property type="match status" value="1"/>
</dbReference>
<dbReference type="Gene3D" id="3.40.50.720">
    <property type="entry name" value="NAD(P)-binding Rossmann-like Domain"/>
    <property type="match status" value="1"/>
</dbReference>
<dbReference type="HAMAP" id="MF_00639">
    <property type="entry name" value="MurD"/>
    <property type="match status" value="1"/>
</dbReference>
<dbReference type="InterPro" id="IPR036565">
    <property type="entry name" value="Mur-like_cat_sf"/>
</dbReference>
<dbReference type="InterPro" id="IPR004101">
    <property type="entry name" value="Mur_ligase_C"/>
</dbReference>
<dbReference type="InterPro" id="IPR036615">
    <property type="entry name" value="Mur_ligase_C_dom_sf"/>
</dbReference>
<dbReference type="InterPro" id="IPR013221">
    <property type="entry name" value="Mur_ligase_cen"/>
</dbReference>
<dbReference type="InterPro" id="IPR005762">
    <property type="entry name" value="MurD"/>
</dbReference>
<dbReference type="NCBIfam" id="TIGR01087">
    <property type="entry name" value="murD"/>
    <property type="match status" value="1"/>
</dbReference>
<dbReference type="PANTHER" id="PTHR43692">
    <property type="entry name" value="UDP-N-ACETYLMURAMOYLALANINE--D-GLUTAMATE LIGASE"/>
    <property type="match status" value="1"/>
</dbReference>
<dbReference type="PANTHER" id="PTHR43692:SF1">
    <property type="entry name" value="UDP-N-ACETYLMURAMOYLALANINE--D-GLUTAMATE LIGASE"/>
    <property type="match status" value="1"/>
</dbReference>
<dbReference type="Pfam" id="PF02875">
    <property type="entry name" value="Mur_ligase_C"/>
    <property type="match status" value="1"/>
</dbReference>
<dbReference type="Pfam" id="PF08245">
    <property type="entry name" value="Mur_ligase_M"/>
    <property type="match status" value="1"/>
</dbReference>
<dbReference type="Pfam" id="PF21799">
    <property type="entry name" value="MurD-like_N"/>
    <property type="match status" value="1"/>
</dbReference>
<dbReference type="SUPFAM" id="SSF51984">
    <property type="entry name" value="MurCD N-terminal domain"/>
    <property type="match status" value="1"/>
</dbReference>
<dbReference type="SUPFAM" id="SSF53623">
    <property type="entry name" value="MurD-like peptide ligases, catalytic domain"/>
    <property type="match status" value="1"/>
</dbReference>
<dbReference type="SUPFAM" id="SSF53244">
    <property type="entry name" value="MurD-like peptide ligases, peptide-binding domain"/>
    <property type="match status" value="1"/>
</dbReference>
<comment type="function">
    <text evidence="1">Cell wall formation. Catalyzes the addition of glutamate to the nucleotide precursor UDP-N-acetylmuramoyl-L-alanine (UMA).</text>
</comment>
<comment type="catalytic activity">
    <reaction evidence="1">
        <text>UDP-N-acetyl-alpha-D-muramoyl-L-alanine + D-glutamate + ATP = UDP-N-acetyl-alpha-D-muramoyl-L-alanyl-D-glutamate + ADP + phosphate + H(+)</text>
        <dbReference type="Rhea" id="RHEA:16429"/>
        <dbReference type="ChEBI" id="CHEBI:15378"/>
        <dbReference type="ChEBI" id="CHEBI:29986"/>
        <dbReference type="ChEBI" id="CHEBI:30616"/>
        <dbReference type="ChEBI" id="CHEBI:43474"/>
        <dbReference type="ChEBI" id="CHEBI:83898"/>
        <dbReference type="ChEBI" id="CHEBI:83900"/>
        <dbReference type="ChEBI" id="CHEBI:456216"/>
        <dbReference type="EC" id="6.3.2.9"/>
    </reaction>
</comment>
<comment type="pathway">
    <text evidence="1">Cell wall biogenesis; peptidoglycan biosynthesis.</text>
</comment>
<comment type="subcellular location">
    <subcellularLocation>
        <location evidence="1">Cytoplasm</location>
    </subcellularLocation>
</comment>
<comment type="similarity">
    <text evidence="1">Belongs to the MurCDEF family.</text>
</comment>
<evidence type="ECO:0000255" key="1">
    <source>
        <dbReference type="HAMAP-Rule" id="MF_00639"/>
    </source>
</evidence>
<name>MURD_NEIMB</name>
<protein>
    <recommendedName>
        <fullName evidence="1">UDP-N-acetylmuramoylalanine--D-glutamate ligase</fullName>
        <ecNumber evidence="1">6.3.2.9</ecNumber>
    </recommendedName>
    <alternativeName>
        <fullName evidence="1">D-glutamic acid-adding enzyme</fullName>
    </alternativeName>
    <alternativeName>
        <fullName evidence="1">UDP-N-acetylmuramoyl-L-alanyl-D-glutamate synthetase</fullName>
    </alternativeName>
</protein>
<keyword id="KW-0067">ATP-binding</keyword>
<keyword id="KW-0131">Cell cycle</keyword>
<keyword id="KW-0132">Cell division</keyword>
<keyword id="KW-0133">Cell shape</keyword>
<keyword id="KW-0961">Cell wall biogenesis/degradation</keyword>
<keyword id="KW-0963">Cytoplasm</keyword>
<keyword id="KW-0436">Ligase</keyword>
<keyword id="KW-0547">Nucleotide-binding</keyword>
<keyword id="KW-0573">Peptidoglycan synthesis</keyword>
<keyword id="KW-1185">Reference proteome</keyword>
<organism>
    <name type="scientific">Neisseria meningitidis serogroup B (strain ATCC BAA-335 / MC58)</name>
    <dbReference type="NCBI Taxonomy" id="122586"/>
    <lineage>
        <taxon>Bacteria</taxon>
        <taxon>Pseudomonadati</taxon>
        <taxon>Pseudomonadota</taxon>
        <taxon>Betaproteobacteria</taxon>
        <taxon>Neisseriales</taxon>
        <taxon>Neisseriaceae</taxon>
        <taxon>Neisseria</taxon>
    </lineage>
</organism>
<gene>
    <name evidence="1" type="primary">murD</name>
    <name type="ordered locus">NMB0420</name>
</gene>